<keyword id="KW-0028">Amino-acid biosynthesis</keyword>
<keyword id="KW-0170">Cobalt</keyword>
<keyword id="KW-0220">Diaminopimelate biosynthesis</keyword>
<keyword id="KW-0378">Hydrolase</keyword>
<keyword id="KW-0457">Lysine biosynthesis</keyword>
<keyword id="KW-0479">Metal-binding</keyword>
<keyword id="KW-1185">Reference proteome</keyword>
<keyword id="KW-0862">Zinc</keyword>
<proteinExistence type="inferred from homology"/>
<comment type="function">
    <text evidence="1">Catalyzes the hydrolysis of N-succinyl-L,L-diaminopimelic acid (SDAP), forming succinate and LL-2,6-diaminopimelate (DAP), an intermediate involved in the bacterial biosynthesis of lysine and meso-diaminopimelic acid, an essential component of bacterial cell walls.</text>
</comment>
<comment type="catalytic activity">
    <reaction evidence="1">
        <text>N-succinyl-(2S,6S)-2,6-diaminopimelate + H2O = (2S,6S)-2,6-diaminopimelate + succinate</text>
        <dbReference type="Rhea" id="RHEA:22608"/>
        <dbReference type="ChEBI" id="CHEBI:15377"/>
        <dbReference type="ChEBI" id="CHEBI:30031"/>
        <dbReference type="ChEBI" id="CHEBI:57609"/>
        <dbReference type="ChEBI" id="CHEBI:58087"/>
        <dbReference type="EC" id="3.5.1.18"/>
    </reaction>
</comment>
<comment type="cofactor">
    <cofactor evidence="1">
        <name>Zn(2+)</name>
        <dbReference type="ChEBI" id="CHEBI:29105"/>
    </cofactor>
    <cofactor evidence="1">
        <name>Co(2+)</name>
        <dbReference type="ChEBI" id="CHEBI:48828"/>
    </cofactor>
    <text evidence="1">Binds 2 Zn(2+) or Co(2+) ions per subunit.</text>
</comment>
<comment type="pathway">
    <text evidence="1">Amino-acid biosynthesis; L-lysine biosynthesis via DAP pathway; LL-2,6-diaminopimelate from (S)-tetrahydrodipicolinate (succinylase route): step 3/3.</text>
</comment>
<comment type="subunit">
    <text evidence="1">Homodimer.</text>
</comment>
<comment type="similarity">
    <text evidence="1">Belongs to the peptidase M20A family. DapE subfamily.</text>
</comment>
<organism>
    <name type="scientific">Bradyrhizobium diazoefficiens (strain JCM 10833 / BCRC 13528 / IAM 13628 / NBRC 14792 / USDA 110)</name>
    <dbReference type="NCBI Taxonomy" id="224911"/>
    <lineage>
        <taxon>Bacteria</taxon>
        <taxon>Pseudomonadati</taxon>
        <taxon>Pseudomonadota</taxon>
        <taxon>Alphaproteobacteria</taxon>
        <taxon>Hyphomicrobiales</taxon>
        <taxon>Nitrobacteraceae</taxon>
        <taxon>Bradyrhizobium</taxon>
    </lineage>
</organism>
<name>DAPE_BRADU</name>
<feature type="chain" id="PRO_0000375481" description="Succinyl-diaminopimelate desuccinylase">
    <location>
        <begin position="1"/>
        <end position="388"/>
    </location>
</feature>
<feature type="active site" evidence="1">
    <location>
        <position position="73"/>
    </location>
</feature>
<feature type="active site" description="Proton acceptor" evidence="1">
    <location>
        <position position="143"/>
    </location>
</feature>
<feature type="binding site" evidence="1">
    <location>
        <position position="71"/>
    </location>
    <ligand>
        <name>Zn(2+)</name>
        <dbReference type="ChEBI" id="CHEBI:29105"/>
        <label>1</label>
    </ligand>
</feature>
<feature type="binding site" evidence="1">
    <location>
        <position position="104"/>
    </location>
    <ligand>
        <name>Zn(2+)</name>
        <dbReference type="ChEBI" id="CHEBI:29105"/>
        <label>1</label>
    </ligand>
</feature>
<feature type="binding site" evidence="1">
    <location>
        <position position="104"/>
    </location>
    <ligand>
        <name>Zn(2+)</name>
        <dbReference type="ChEBI" id="CHEBI:29105"/>
        <label>2</label>
    </ligand>
</feature>
<feature type="binding site" evidence="1">
    <location>
        <position position="144"/>
    </location>
    <ligand>
        <name>Zn(2+)</name>
        <dbReference type="ChEBI" id="CHEBI:29105"/>
        <label>2</label>
    </ligand>
</feature>
<feature type="binding site" evidence="1">
    <location>
        <position position="172"/>
    </location>
    <ligand>
        <name>Zn(2+)</name>
        <dbReference type="ChEBI" id="CHEBI:29105"/>
        <label>1</label>
    </ligand>
</feature>
<feature type="binding site" evidence="1">
    <location>
        <position position="361"/>
    </location>
    <ligand>
        <name>Zn(2+)</name>
        <dbReference type="ChEBI" id="CHEBI:29105"/>
        <label>2</label>
    </ligand>
</feature>
<protein>
    <recommendedName>
        <fullName evidence="1">Succinyl-diaminopimelate desuccinylase</fullName>
        <shortName evidence="1">SDAP desuccinylase</shortName>
        <ecNumber evidence="1">3.5.1.18</ecNumber>
    </recommendedName>
    <alternativeName>
        <fullName evidence="1">N-succinyl-LL-2,6-diaminoheptanedioate amidohydrolase</fullName>
    </alternativeName>
</protein>
<gene>
    <name evidence="1" type="primary">dapE</name>
    <name type="ordered locus">blr8106</name>
</gene>
<reference key="1">
    <citation type="journal article" date="2002" name="DNA Res.">
        <title>Complete genomic sequence of nitrogen-fixing symbiotic bacterium Bradyrhizobium japonicum USDA110.</title>
        <authorList>
            <person name="Kaneko T."/>
            <person name="Nakamura Y."/>
            <person name="Sato S."/>
            <person name="Minamisawa K."/>
            <person name="Uchiumi T."/>
            <person name="Sasamoto S."/>
            <person name="Watanabe A."/>
            <person name="Idesawa K."/>
            <person name="Iriguchi M."/>
            <person name="Kawashima K."/>
            <person name="Kohara M."/>
            <person name="Matsumoto M."/>
            <person name="Shimpo S."/>
            <person name="Tsuruoka H."/>
            <person name="Wada T."/>
            <person name="Yamada M."/>
            <person name="Tabata S."/>
        </authorList>
    </citation>
    <scope>NUCLEOTIDE SEQUENCE [LARGE SCALE GENOMIC DNA]</scope>
    <source>
        <strain>JCM 10833 / BCRC 13528 / IAM 13628 / NBRC 14792 / USDA 110</strain>
    </source>
</reference>
<evidence type="ECO:0000255" key="1">
    <source>
        <dbReference type="HAMAP-Rule" id="MF_01690"/>
    </source>
</evidence>
<dbReference type="EC" id="3.5.1.18" evidence="1"/>
<dbReference type="EMBL" id="BA000040">
    <property type="protein sequence ID" value="BAC53371.1"/>
    <property type="molecule type" value="Genomic_DNA"/>
</dbReference>
<dbReference type="RefSeq" id="NP_774746.1">
    <property type="nucleotide sequence ID" value="NC_004463.1"/>
</dbReference>
<dbReference type="RefSeq" id="WP_011090828.1">
    <property type="nucleotide sequence ID" value="NC_004463.1"/>
</dbReference>
<dbReference type="SMR" id="Q89BP2"/>
<dbReference type="FunCoup" id="Q89BP2">
    <property type="interactions" value="510"/>
</dbReference>
<dbReference type="STRING" id="224911.AAV28_38225"/>
<dbReference type="EnsemblBacteria" id="BAC53371">
    <property type="protein sequence ID" value="BAC53371"/>
    <property type="gene ID" value="BAC53371"/>
</dbReference>
<dbReference type="GeneID" id="46495017"/>
<dbReference type="KEGG" id="bja:blr8106"/>
<dbReference type="PATRIC" id="fig|224911.44.peg.8276"/>
<dbReference type="eggNOG" id="COG0624">
    <property type="taxonomic scope" value="Bacteria"/>
</dbReference>
<dbReference type="HOGENOM" id="CLU_021802_4_0_5"/>
<dbReference type="InParanoid" id="Q89BP2"/>
<dbReference type="OrthoDB" id="9809784at2"/>
<dbReference type="PhylomeDB" id="Q89BP2"/>
<dbReference type="UniPathway" id="UPA00034">
    <property type="reaction ID" value="UER00021"/>
</dbReference>
<dbReference type="Proteomes" id="UP000002526">
    <property type="component" value="Chromosome"/>
</dbReference>
<dbReference type="GO" id="GO:0005829">
    <property type="term" value="C:cytosol"/>
    <property type="evidence" value="ECO:0000318"/>
    <property type="project" value="GO_Central"/>
</dbReference>
<dbReference type="GO" id="GO:0050897">
    <property type="term" value="F:cobalt ion binding"/>
    <property type="evidence" value="ECO:0007669"/>
    <property type="project" value="UniProtKB-UniRule"/>
</dbReference>
<dbReference type="GO" id="GO:0009014">
    <property type="term" value="F:succinyl-diaminopimelate desuccinylase activity"/>
    <property type="evidence" value="ECO:0000318"/>
    <property type="project" value="GO_Central"/>
</dbReference>
<dbReference type="GO" id="GO:0008270">
    <property type="term" value="F:zinc ion binding"/>
    <property type="evidence" value="ECO:0007669"/>
    <property type="project" value="UniProtKB-UniRule"/>
</dbReference>
<dbReference type="GO" id="GO:0019877">
    <property type="term" value="P:diaminopimelate biosynthetic process"/>
    <property type="evidence" value="ECO:0007669"/>
    <property type="project" value="UniProtKB-UniRule"/>
</dbReference>
<dbReference type="GO" id="GO:0009089">
    <property type="term" value="P:lysine biosynthetic process via diaminopimelate"/>
    <property type="evidence" value="ECO:0000318"/>
    <property type="project" value="GO_Central"/>
</dbReference>
<dbReference type="CDD" id="cd03891">
    <property type="entry name" value="M20_DapE_proteobac"/>
    <property type="match status" value="1"/>
</dbReference>
<dbReference type="Gene3D" id="3.40.630.10">
    <property type="entry name" value="Zn peptidases"/>
    <property type="match status" value="2"/>
</dbReference>
<dbReference type="HAMAP" id="MF_01690">
    <property type="entry name" value="DapE"/>
    <property type="match status" value="1"/>
</dbReference>
<dbReference type="InterPro" id="IPR036264">
    <property type="entry name" value="Bact_exopeptidase_dim_dom"/>
</dbReference>
<dbReference type="InterPro" id="IPR005941">
    <property type="entry name" value="DapE_proteobac"/>
</dbReference>
<dbReference type="InterPro" id="IPR002933">
    <property type="entry name" value="Peptidase_M20"/>
</dbReference>
<dbReference type="InterPro" id="IPR011650">
    <property type="entry name" value="Peptidase_M20_dimer"/>
</dbReference>
<dbReference type="InterPro" id="IPR050072">
    <property type="entry name" value="Peptidase_M20A"/>
</dbReference>
<dbReference type="NCBIfam" id="TIGR01246">
    <property type="entry name" value="dapE_proteo"/>
    <property type="match status" value="1"/>
</dbReference>
<dbReference type="NCBIfam" id="NF009557">
    <property type="entry name" value="PRK13009.1"/>
    <property type="match status" value="1"/>
</dbReference>
<dbReference type="PANTHER" id="PTHR43808">
    <property type="entry name" value="ACETYLORNITHINE DEACETYLASE"/>
    <property type="match status" value="1"/>
</dbReference>
<dbReference type="PANTHER" id="PTHR43808:SF31">
    <property type="entry name" value="N-ACETYL-L-CITRULLINE DEACETYLASE"/>
    <property type="match status" value="1"/>
</dbReference>
<dbReference type="Pfam" id="PF07687">
    <property type="entry name" value="M20_dimer"/>
    <property type="match status" value="1"/>
</dbReference>
<dbReference type="Pfam" id="PF01546">
    <property type="entry name" value="Peptidase_M20"/>
    <property type="match status" value="1"/>
</dbReference>
<dbReference type="SUPFAM" id="SSF55031">
    <property type="entry name" value="Bacterial exopeptidase dimerisation domain"/>
    <property type="match status" value="1"/>
</dbReference>
<dbReference type="SUPFAM" id="SSF53187">
    <property type="entry name" value="Zn-dependent exopeptidases"/>
    <property type="match status" value="1"/>
</dbReference>
<sequence>MTDALSIARDLIRCPSVTPADAGALGVLENALNAAGFTCHRVTFSEPGTADVDNLYARIGSEGPHITFAGHTDVVPAGDESAWSVGAFSGEVKDGFLHGRGAVDMKGGIACSVAAVLEHLAANGGKPRGDGTGSISFLITGDEEDVSINGTIKLLKWAAERGETFDHCVLGEPSNVETLGDTIKVGRRGSQSGTLYVDGVQGHVAYPHRASNPVPDISRLIVAISDEPLDHGSAQFQASNLEFTSVDVGNKANNVIPGEARAKFNIRYNDNHTQASLRELVETRLAKACGNRIKARIVWEPSNSNVFVTKPGPFTDLAVSAIEEITGRKPELSTSGGTSDARFISSYCPVIEFGLVGQTMHQVDERVPVKDLEKLTQVYRGILTRYFG</sequence>
<accession>Q89BP2</accession>